<evidence type="ECO:0000250" key="1">
    <source>
        <dbReference type="UniProtKB" id="A0A075FAK4"/>
    </source>
</evidence>
<evidence type="ECO:0000250" key="2">
    <source>
        <dbReference type="UniProtKB" id="C7BKP9"/>
    </source>
</evidence>
<evidence type="ECO:0000250" key="3">
    <source>
        <dbReference type="UniProtKB" id="Q38802"/>
    </source>
</evidence>
<evidence type="ECO:0000255" key="4"/>
<evidence type="ECO:0000269" key="5">
    <source>
    </source>
</evidence>
<evidence type="ECO:0000303" key="6">
    <source>
    </source>
</evidence>
<evidence type="ECO:0000305" key="7"/>
<evidence type="ECO:0000305" key="8">
    <source>
    </source>
</evidence>
<gene>
    <name evidence="6" type="primary">CPS2</name>
</gene>
<sequence length="784" mass="89093">MSMTLFASVTRPGLPGPTALRFPETRHLFHSVTAFAASFSPSKSSVGSSQCNATTPPAEYKEYTGNDLAKTTVDGIEKDIHSNKGLSDKTRELVMSIRSILRTMEEGEISMSPYDTAWVAMVEDIDGGGGPHFPSTLDWISSNQLADGSWGDPIFLVYDRLINTFACVIALTSWKMHPDKCDKAISFIRENMYKLDDEKEERMPIGFEMTFPPLVEKAKRLNINFPDDSPGLRKIYAQRDLKFKRIPWDKMHTVPTTLLYSLEGMALEADVLDWQKLLKLQSPDGSLFYSPASTAFALQQTGDHNCLQYLLKLVQTFNGGVPNLYPLDLYERSWAVDRLQRLGISRFFEPQIEECMKYVHRYWSNKNGVYAARHSDIQDIDDTSMGFRVLRLNGFDVSPDAFKQFEDDDGEFLCFIGQTNHSVSATYNLYRASQVMFPGEEILQRAKKFSTKFLQDKRAENELLDKWVITKDLPGEVGYALDVPWYASLPRVEARFYIEQYGGEDVAWIGKVLFRAPNVNNDNYLELAKLDYNDCQALHQHEWKNIQQWYKSCGLRGFGLGEESLLLAYYIAAASVFEPEKSGERLAWAKTAALVKTITSQKLTKDQKHDFIREFEQGSILENANGGRCGTSNKLVETIFTTVHKMSLETSSRDIHHQLLHAWRKWVVAWEVGGDGDAELFVQTLNLTGGSSEPTPFCHPKYQQLLEVTTRICHQLRKSTVKEIQVESDMQELVKLVVTKSSGDLDSDIKQKFLTIARSFYYAAHCSTEAIGFHIVKVLFERLV</sequence>
<proteinExistence type="evidence at transcript level"/>
<accession>A0A075F9Z3</accession>
<feature type="transit peptide" description="Chloroplast" evidence="4">
    <location>
        <begin position="1"/>
        <end position="57"/>
    </location>
</feature>
<feature type="chain" id="PRO_0000449302" description="ent-copalyl diphosphate synthase 2, chloroplastic">
    <location>
        <begin position="58"/>
        <end position="784"/>
    </location>
</feature>
<feature type="short sequence motif" description="DXDD motif" evidence="1">
    <location>
        <begin position="379"/>
        <end position="382"/>
    </location>
</feature>
<feature type="binding site" evidence="3">
    <location>
        <position position="242"/>
    </location>
    <ligand>
        <name>substrate</name>
    </ligand>
</feature>
<feature type="binding site" evidence="2">
    <location>
        <position position="379"/>
    </location>
    <ligand>
        <name>Mg(2+)</name>
        <dbReference type="ChEBI" id="CHEBI:18420"/>
    </ligand>
</feature>
<feature type="binding site" evidence="2">
    <location>
        <position position="381"/>
    </location>
    <ligand>
        <name>Mg(2+)</name>
        <dbReference type="ChEBI" id="CHEBI:18420"/>
    </ligand>
</feature>
<feature type="binding site" evidence="3">
    <location>
        <position position="466"/>
    </location>
    <ligand>
        <name>substrate</name>
    </ligand>
</feature>
<dbReference type="EC" id="4.2.-.-" evidence="8"/>
<dbReference type="EMBL" id="KJ584451">
    <property type="protein sequence ID" value="AIE77091.1"/>
    <property type="molecule type" value="mRNA"/>
</dbReference>
<dbReference type="SMR" id="A0A075F9Z3"/>
<dbReference type="UniPathway" id="UPA00213"/>
<dbReference type="UniPathway" id="UPA00390"/>
<dbReference type="GO" id="GO:0009507">
    <property type="term" value="C:chloroplast"/>
    <property type="evidence" value="ECO:0007669"/>
    <property type="project" value="UniProtKB-SubCell"/>
</dbReference>
<dbReference type="GO" id="GO:0000287">
    <property type="term" value="F:magnesium ion binding"/>
    <property type="evidence" value="ECO:0007669"/>
    <property type="project" value="TreeGrafter"/>
</dbReference>
<dbReference type="GO" id="GO:0010333">
    <property type="term" value="F:terpene synthase activity"/>
    <property type="evidence" value="ECO:0007669"/>
    <property type="project" value="InterPro"/>
</dbReference>
<dbReference type="GO" id="GO:0009686">
    <property type="term" value="P:gibberellin biosynthetic process"/>
    <property type="evidence" value="ECO:0007669"/>
    <property type="project" value="UniProtKB-UniPathway"/>
</dbReference>
<dbReference type="FunFam" id="1.50.10.130:FF:000002">
    <property type="entry name" value="Ent-copalyl diphosphate synthase, chloroplastic"/>
    <property type="match status" value="1"/>
</dbReference>
<dbReference type="Gene3D" id="1.50.10.160">
    <property type="match status" value="1"/>
</dbReference>
<dbReference type="Gene3D" id="1.10.600.10">
    <property type="entry name" value="Farnesyl Diphosphate Synthase"/>
    <property type="match status" value="1"/>
</dbReference>
<dbReference type="Gene3D" id="1.50.10.130">
    <property type="entry name" value="Terpene synthase, N-terminal domain"/>
    <property type="match status" value="1"/>
</dbReference>
<dbReference type="InterPro" id="IPR008949">
    <property type="entry name" value="Isoprenoid_synthase_dom_sf"/>
</dbReference>
<dbReference type="InterPro" id="IPR001906">
    <property type="entry name" value="Terpene_synth_N"/>
</dbReference>
<dbReference type="InterPro" id="IPR036965">
    <property type="entry name" value="Terpene_synth_N_sf"/>
</dbReference>
<dbReference type="InterPro" id="IPR050148">
    <property type="entry name" value="Terpene_synthase-like"/>
</dbReference>
<dbReference type="InterPro" id="IPR008930">
    <property type="entry name" value="Terpenoid_cyclase/PrenylTrfase"/>
</dbReference>
<dbReference type="PANTHER" id="PTHR31739">
    <property type="entry name" value="ENT-COPALYL DIPHOSPHATE SYNTHASE, CHLOROPLASTIC"/>
    <property type="match status" value="1"/>
</dbReference>
<dbReference type="PANTHER" id="PTHR31739:SF4">
    <property type="entry name" value="ENT-COPALYL DIPHOSPHATE SYNTHASE, CHLOROPLASTIC"/>
    <property type="match status" value="1"/>
</dbReference>
<dbReference type="Pfam" id="PF01397">
    <property type="entry name" value="Terpene_synth"/>
    <property type="match status" value="1"/>
</dbReference>
<dbReference type="SFLD" id="SFLDG01014">
    <property type="entry name" value="Terpene_Cyclase_Like_1_N-term"/>
    <property type="match status" value="1"/>
</dbReference>
<dbReference type="SFLD" id="SFLDG01605">
    <property type="entry name" value="Terpene_Cyclase_Like_1_N-term"/>
    <property type="match status" value="1"/>
</dbReference>
<dbReference type="SUPFAM" id="SSF48239">
    <property type="entry name" value="Terpenoid cyclases/Protein prenyltransferases"/>
    <property type="match status" value="2"/>
</dbReference>
<dbReference type="SUPFAM" id="SSF48576">
    <property type="entry name" value="Terpenoid synthases"/>
    <property type="match status" value="1"/>
</dbReference>
<organism>
    <name type="scientific">Marrubium vulgare</name>
    <name type="common">White horehound</name>
    <dbReference type="NCBI Taxonomy" id="41230"/>
    <lineage>
        <taxon>Eukaryota</taxon>
        <taxon>Viridiplantae</taxon>
        <taxon>Streptophyta</taxon>
        <taxon>Embryophyta</taxon>
        <taxon>Tracheophyta</taxon>
        <taxon>Spermatophyta</taxon>
        <taxon>Magnoliopsida</taxon>
        <taxon>eudicotyledons</taxon>
        <taxon>Gunneridae</taxon>
        <taxon>Pentapetalae</taxon>
        <taxon>asterids</taxon>
        <taxon>lamiids</taxon>
        <taxon>Lamiales</taxon>
        <taxon>Lamiaceae</taxon>
        <taxon>Lamioideae</taxon>
        <taxon>Marrubieae</taxon>
        <taxon>Marrubium</taxon>
    </lineage>
</organism>
<reference key="1">
    <citation type="journal article" date="2014" name="Plant J.">
        <title>Diterpene synthases of the biosynthetic system of medicinally active diterpenoids in Marrubium vulgare.</title>
        <authorList>
            <person name="Zerbe P."/>
            <person name="Chiang A."/>
            <person name="Dullat H."/>
            <person name="O'Neil-Johnson M."/>
            <person name="Starks C."/>
            <person name="Hamberger B."/>
            <person name="Bohlmann J."/>
        </authorList>
    </citation>
    <scope>NUCLEOTIDE SEQUENCE [MRNA]</scope>
    <scope>FUNCTION</scope>
    <scope>PATHWAY</scope>
    <scope>TISSUE SPECIFICITY</scope>
</reference>
<keyword id="KW-0150">Chloroplast</keyword>
<keyword id="KW-0456">Lyase</keyword>
<keyword id="KW-0460">Magnesium</keyword>
<keyword id="KW-0479">Metal-binding</keyword>
<keyword id="KW-0934">Plastid</keyword>
<keyword id="KW-0809">Transit peptide</keyword>
<protein>
    <recommendedName>
        <fullName evidence="6">ent-copalyl diphosphate synthase 2, chloroplastic</fullName>
        <shortName evidence="6">MvCPS2</shortName>
        <ecNumber evidence="8">4.2.-.-</ecNumber>
    </recommendedName>
</protein>
<name>CPS2_MARVU</name>
<comment type="function">
    <text evidence="8">Involved in the biosynthesis of labdane-type diterpenoid including marrubiin and other labdane-related furanoid diterpenoids with potential applications as anti-diabetics, analgesics or vasorelaxants (Probable). May be involved in the conversion of geranylgeranyl diphosphate (GGPP) to ent-copalyl diphosphate (ent-CPP) and 8-hydroxycopalyl diphosphate (LPP, labda-13-en-8-ol diphosphate) (Probable).</text>
</comment>
<comment type="cofactor">
    <cofactor evidence="3">
        <name>Mg(2+)</name>
        <dbReference type="ChEBI" id="CHEBI:18420"/>
    </cofactor>
</comment>
<comment type="pathway">
    <text evidence="8">Plant hormone biosynthesis; gibberellin biosynthesis.</text>
</comment>
<comment type="pathway">
    <text evidence="8">Secondary metabolite biosynthesis; terpenoid biosynthesis.</text>
</comment>
<comment type="subcellular location">
    <subcellularLocation>
        <location evidence="4">Plastid</location>
        <location evidence="4">Chloroplast</location>
    </subcellularLocation>
</comment>
<comment type="tissue specificity">
    <text evidence="5">Present in both leaves and flowers.</text>
</comment>
<comment type="domain">
    <text evidence="7">The Asp-Xaa-Asp-Asp (DXDD) motif is important for the catalytic activity, presumably through binding to Mg(2+).</text>
</comment>
<comment type="similarity">
    <text evidence="7">Belongs to the terpene synthase family.</text>
</comment>